<sequence>MSKLTIEQFIAAIKEMSMLELNDLVKAIETEFGVSAAAPVAAAAAPVAAEAPTEVTIKLVEAGTNKVGVIKLIREITGLGLMEAKTAAETAGSVIKEDVKTEEANEIKKKFDELGAKVQLV</sequence>
<feature type="chain" id="PRO_1000079818" description="Large ribosomal subunit protein bL12">
    <location>
        <begin position="1"/>
        <end position="121"/>
    </location>
</feature>
<name>RL7_UREP2</name>
<comment type="function">
    <text evidence="1">Forms part of the ribosomal stalk which helps the ribosome interact with GTP-bound translation factors. Is thus essential for accurate translation.</text>
</comment>
<comment type="subunit">
    <text evidence="1">Homodimer. Part of the ribosomal stalk of the 50S ribosomal subunit. Forms a multimeric L10(L12)X complex, where L10 forms an elongated spine to which 2 to 4 L12 dimers bind in a sequential fashion. Binds GTP-bound translation factors.</text>
</comment>
<comment type="similarity">
    <text evidence="1">Belongs to the bacterial ribosomal protein bL12 family.</text>
</comment>
<organism>
    <name type="scientific">Ureaplasma parvum serovar 3 (strain ATCC 27815 / 27 / NCTC 11736)</name>
    <dbReference type="NCBI Taxonomy" id="505682"/>
    <lineage>
        <taxon>Bacteria</taxon>
        <taxon>Bacillati</taxon>
        <taxon>Mycoplasmatota</taxon>
        <taxon>Mycoplasmoidales</taxon>
        <taxon>Mycoplasmoidaceae</taxon>
        <taxon>Ureaplasma</taxon>
    </lineage>
</organism>
<gene>
    <name evidence="1" type="primary">rplL</name>
    <name type="ordered locus">UPA3_0011</name>
</gene>
<keyword id="KW-0687">Ribonucleoprotein</keyword>
<keyword id="KW-0689">Ribosomal protein</keyword>
<reference key="1">
    <citation type="submission" date="2008-02" db="EMBL/GenBank/DDBJ databases">
        <title>Genome sequence of Ureaplasma parvum serovar 3.</title>
        <authorList>
            <person name="Methe B.A."/>
            <person name="Glass J."/>
            <person name="Waites K."/>
            <person name="Shrivastava S."/>
        </authorList>
    </citation>
    <scope>NUCLEOTIDE SEQUENCE [LARGE SCALE GENOMIC DNA]</scope>
    <source>
        <strain>ATCC 27815 / 27 / NCTC 11736</strain>
    </source>
</reference>
<proteinExistence type="inferred from homology"/>
<protein>
    <recommendedName>
        <fullName evidence="1">Large ribosomal subunit protein bL12</fullName>
    </recommendedName>
    <alternativeName>
        <fullName evidence="2">50S ribosomal protein L7/L12</fullName>
    </alternativeName>
</protein>
<accession>B1AHZ7</accession>
<evidence type="ECO:0000255" key="1">
    <source>
        <dbReference type="HAMAP-Rule" id="MF_00368"/>
    </source>
</evidence>
<evidence type="ECO:0000305" key="2"/>
<dbReference type="EMBL" id="CP000942">
    <property type="protein sequence ID" value="ACA33009.1"/>
    <property type="molecule type" value="Genomic_DNA"/>
</dbReference>
<dbReference type="RefSeq" id="WP_006688489.1">
    <property type="nucleotide sequence ID" value="NC_010503.1"/>
</dbReference>
<dbReference type="SMR" id="B1AHZ7"/>
<dbReference type="GeneID" id="29672193"/>
<dbReference type="KEGG" id="upa:UPA3_0011"/>
<dbReference type="HOGENOM" id="CLU_086499_3_2_14"/>
<dbReference type="Proteomes" id="UP000002162">
    <property type="component" value="Chromosome"/>
</dbReference>
<dbReference type="GO" id="GO:0022625">
    <property type="term" value="C:cytosolic large ribosomal subunit"/>
    <property type="evidence" value="ECO:0007669"/>
    <property type="project" value="TreeGrafter"/>
</dbReference>
<dbReference type="GO" id="GO:0003729">
    <property type="term" value="F:mRNA binding"/>
    <property type="evidence" value="ECO:0007669"/>
    <property type="project" value="TreeGrafter"/>
</dbReference>
<dbReference type="GO" id="GO:0003735">
    <property type="term" value="F:structural constituent of ribosome"/>
    <property type="evidence" value="ECO:0007669"/>
    <property type="project" value="InterPro"/>
</dbReference>
<dbReference type="GO" id="GO:0006412">
    <property type="term" value="P:translation"/>
    <property type="evidence" value="ECO:0007669"/>
    <property type="project" value="UniProtKB-UniRule"/>
</dbReference>
<dbReference type="CDD" id="cd00387">
    <property type="entry name" value="Ribosomal_L7_L12"/>
    <property type="match status" value="1"/>
</dbReference>
<dbReference type="FunFam" id="3.30.1390.10:FF:000001">
    <property type="entry name" value="50S ribosomal protein L7/L12"/>
    <property type="match status" value="1"/>
</dbReference>
<dbReference type="Gene3D" id="3.30.1390.10">
    <property type="match status" value="1"/>
</dbReference>
<dbReference type="Gene3D" id="1.20.5.710">
    <property type="entry name" value="Single helix bin"/>
    <property type="match status" value="1"/>
</dbReference>
<dbReference type="HAMAP" id="MF_00368">
    <property type="entry name" value="Ribosomal_bL12"/>
    <property type="match status" value="1"/>
</dbReference>
<dbReference type="InterPro" id="IPR000206">
    <property type="entry name" value="Ribosomal_bL12"/>
</dbReference>
<dbReference type="InterPro" id="IPR013823">
    <property type="entry name" value="Ribosomal_bL12_C"/>
</dbReference>
<dbReference type="InterPro" id="IPR014719">
    <property type="entry name" value="Ribosomal_bL12_C/ClpS-like"/>
</dbReference>
<dbReference type="InterPro" id="IPR008932">
    <property type="entry name" value="Ribosomal_bL12_oligo"/>
</dbReference>
<dbReference type="InterPro" id="IPR036235">
    <property type="entry name" value="Ribosomal_bL12_oligo_N_sf"/>
</dbReference>
<dbReference type="NCBIfam" id="TIGR00855">
    <property type="entry name" value="L12"/>
    <property type="match status" value="1"/>
</dbReference>
<dbReference type="PANTHER" id="PTHR45987">
    <property type="entry name" value="39S RIBOSOMAL PROTEIN L12"/>
    <property type="match status" value="1"/>
</dbReference>
<dbReference type="PANTHER" id="PTHR45987:SF4">
    <property type="entry name" value="LARGE RIBOSOMAL SUBUNIT PROTEIN BL12M"/>
    <property type="match status" value="1"/>
</dbReference>
<dbReference type="Pfam" id="PF00542">
    <property type="entry name" value="Ribosomal_L12"/>
    <property type="match status" value="1"/>
</dbReference>
<dbReference type="Pfam" id="PF16320">
    <property type="entry name" value="Ribosomal_L12_N"/>
    <property type="match status" value="1"/>
</dbReference>
<dbReference type="SUPFAM" id="SSF54736">
    <property type="entry name" value="ClpS-like"/>
    <property type="match status" value="1"/>
</dbReference>
<dbReference type="SUPFAM" id="SSF48300">
    <property type="entry name" value="Ribosomal protein L7/12, oligomerisation (N-terminal) domain"/>
    <property type="match status" value="1"/>
</dbReference>